<comment type="function">
    <text evidence="2">Regulates renal phosphate excretion (By similarity). Regulates bone mineralization by osteoblasts and cartilage mineralization by chondrocytes (By similarity). Regulates the mineralization of the extracellular matrix of the craniofacial complex, such as teeth, bone and cartilage (By similarity). Increases dental pulp stem cell proliferation.</text>
</comment>
<comment type="subunit">
    <text evidence="2">Interacts (via ASARM motif) with PHEX; the interaction is zinc-dependent.</text>
</comment>
<comment type="subcellular location">
    <subcellularLocation>
        <location evidence="1">Secreted</location>
        <location evidence="1">Extracellular space</location>
        <location evidence="1">Extracellular matrix</location>
    </subcellularLocation>
    <subcellularLocation>
        <location evidence="2">Secreted</location>
    </subcellularLocation>
</comment>
<comment type="alternative products">
    <event type="alternative splicing"/>
    <isoform>
        <id>Q9ES02-1</id>
        <name>1</name>
        <sequence type="displayed"/>
    </isoform>
    <isoform>
        <id>Q9ES02-2</id>
        <name>2</name>
        <sequence type="described" ref="VSP_059757"/>
    </isoform>
</comment>
<comment type="tissue specificity">
    <text evidence="5">Expressed in osteoblasts and osteocytes.</text>
</comment>
<comment type="induction">
    <text evidence="5">Induced by dexamethasone.</text>
</comment>
<comment type="domain">
    <text evidence="2">The acidic serine aspartate-rich MEPE-associated (ASARM) motif is sufficient when phosphorylated to inhibit bone mineralization by osteoblasts and cartilage mineralization by chondrocytes by binding hydroxyapatite crystals during the mineralization stage. It can also inhibit dentin mineralization.</text>
</comment>
<comment type="domain">
    <text evidence="2">The dentonin region is sufficient to promote dental pulp stem cell proliferation. It can also stimulate bone formation, osteoblast differentiation, and activate integrin signaling pathways.</text>
</comment>
<comment type="PTM">
    <text evidence="2">Phosphorylated on serine residues in the ASARM motif; the phosphorylation is important for the inhibition of bone mineralization.</text>
</comment>
<comment type="PTM">
    <text evidence="2">Cleaved by CTSB/cathepsin B; the cleavage is blocked by metalloprotease PHEX.</text>
</comment>
<comment type="similarity">
    <text evidence="8">Belongs to the PF07175/osteoregulin family.</text>
</comment>
<proteinExistence type="evidence at transcript level"/>
<reference evidence="9" key="1">
    <citation type="journal article" date="2000" name="J. Biol. Chem.">
        <title>Identification of osteoblast/osteocyte factor 45 (OF45), a bone-specific cDNA encoding an RGD-containing protein that is highly expressed in osteoblasts and osteocytes.</title>
        <authorList>
            <person name="Petersen D.N."/>
            <person name="Tkalcevic G.T."/>
            <person name="Mansolf A.L."/>
            <person name="Rivera-Gonzalez R."/>
            <person name="Brown T.A."/>
        </authorList>
    </citation>
    <scope>NUCLEOTIDE SEQUENCE [MRNA] (ISOFORM 1)</scope>
    <scope>TISSUE SPECIFICITY</scope>
    <scope>INDUCTION</scope>
    <source>
        <strain evidence="9">Sprague-Dawley</strain>
    </source>
</reference>
<reference evidence="10" key="2">
    <citation type="submission" date="2002-07" db="EMBL/GenBank/DDBJ databases">
        <title>Rattus norvegicus cDNA sequence highly expressed in A1-5 cell line (identical to osteoregulin).</title>
        <authorList>
            <person name="Hu B."/>
            <person name="Wang X."/>
            <person name="Wang Y."/>
        </authorList>
    </citation>
    <scope>NUCLEOTIDE SEQUENCE [MRNA] (ISOFORM 1)</scope>
    <source>
        <strain evidence="10">Fischer 344</strain>
    </source>
</reference>
<reference evidence="11" key="3">
    <citation type="submission" date="2002-07" db="EMBL/GenBank/DDBJ databases">
        <title>Rattus norvegicus cDNA sequence expressed in B4 cell line (possible subtype of osteoregulin).</title>
        <authorList>
            <person name="Wang X."/>
            <person name="Hu B."/>
            <person name="Wang Y."/>
        </authorList>
    </citation>
    <scope>NUCLEOTIDE SEQUENCE [MRNA] (ISOFORM 2)</scope>
    <source>
        <strain evidence="11">Fischer 344</strain>
    </source>
</reference>
<reference evidence="12" key="4">
    <citation type="journal article" date="2010" name="Cell. Mol. Life Sci.">
        <title>MEPE evolution in mammals reveals regions and residues of prime functional importance.</title>
        <authorList>
            <person name="Bardet C."/>
            <person name="Delgado S."/>
            <person name="Sire J.Y."/>
        </authorList>
    </citation>
    <scope>NUCLEOTIDE SEQUENCE [GENOMIC DNA]</scope>
</reference>
<reference evidence="15" key="5">
    <citation type="journal article" date="2004" name="Nature">
        <title>Genome sequence of the Brown Norway rat yields insights into mammalian evolution.</title>
        <authorList>
            <person name="Gibbs R.A."/>
            <person name="Weinstock G.M."/>
            <person name="Metzker M.L."/>
            <person name="Muzny D.M."/>
            <person name="Sodergren E.J."/>
            <person name="Scherer S."/>
            <person name="Scott G."/>
            <person name="Steffen D."/>
            <person name="Worley K.C."/>
            <person name="Burch P.E."/>
            <person name="Okwuonu G."/>
            <person name="Hines S."/>
            <person name="Lewis L."/>
            <person name="Deramo C."/>
            <person name="Delgado O."/>
            <person name="Dugan-Rocha S."/>
            <person name="Miner G."/>
            <person name="Morgan M."/>
            <person name="Hawes A."/>
            <person name="Gill R."/>
            <person name="Holt R.A."/>
            <person name="Adams M.D."/>
            <person name="Amanatides P.G."/>
            <person name="Baden-Tillson H."/>
            <person name="Barnstead M."/>
            <person name="Chin S."/>
            <person name="Evans C.A."/>
            <person name="Ferriera S."/>
            <person name="Fosler C."/>
            <person name="Glodek A."/>
            <person name="Gu Z."/>
            <person name="Jennings D."/>
            <person name="Kraft C.L."/>
            <person name="Nguyen T."/>
            <person name="Pfannkoch C.M."/>
            <person name="Sitter C."/>
            <person name="Sutton G.G."/>
            <person name="Venter J.C."/>
            <person name="Woodage T."/>
            <person name="Smith D."/>
            <person name="Lee H.-M."/>
            <person name="Gustafson E."/>
            <person name="Cahill P."/>
            <person name="Kana A."/>
            <person name="Doucette-Stamm L."/>
            <person name="Weinstock K."/>
            <person name="Fechtel K."/>
            <person name="Weiss R.B."/>
            <person name="Dunn D.M."/>
            <person name="Green E.D."/>
            <person name="Blakesley R.W."/>
            <person name="Bouffard G.G."/>
            <person name="De Jong P.J."/>
            <person name="Osoegawa K."/>
            <person name="Zhu B."/>
            <person name="Marra M."/>
            <person name="Schein J."/>
            <person name="Bosdet I."/>
            <person name="Fjell C."/>
            <person name="Jones S."/>
            <person name="Krzywinski M."/>
            <person name="Mathewson C."/>
            <person name="Siddiqui A."/>
            <person name="Wye N."/>
            <person name="McPherson J."/>
            <person name="Zhao S."/>
            <person name="Fraser C.M."/>
            <person name="Shetty J."/>
            <person name="Shatsman S."/>
            <person name="Geer K."/>
            <person name="Chen Y."/>
            <person name="Abramzon S."/>
            <person name="Nierman W.C."/>
            <person name="Havlak P.H."/>
            <person name="Chen R."/>
            <person name="Durbin K.J."/>
            <person name="Egan A."/>
            <person name="Ren Y."/>
            <person name="Song X.-Z."/>
            <person name="Li B."/>
            <person name="Liu Y."/>
            <person name="Qin X."/>
            <person name="Cawley S."/>
            <person name="Cooney A.J."/>
            <person name="D'Souza L.M."/>
            <person name="Martin K."/>
            <person name="Wu J.Q."/>
            <person name="Gonzalez-Garay M.L."/>
            <person name="Jackson A.R."/>
            <person name="Kalafus K.J."/>
            <person name="McLeod M.P."/>
            <person name="Milosavljevic A."/>
            <person name="Virk D."/>
            <person name="Volkov A."/>
            <person name="Wheeler D.A."/>
            <person name="Zhang Z."/>
            <person name="Bailey J.A."/>
            <person name="Eichler E.E."/>
            <person name="Tuzun E."/>
            <person name="Birney E."/>
            <person name="Mongin E."/>
            <person name="Ureta-Vidal A."/>
            <person name="Woodwark C."/>
            <person name="Zdobnov E."/>
            <person name="Bork P."/>
            <person name="Suyama M."/>
            <person name="Torrents D."/>
            <person name="Alexandersson M."/>
            <person name="Trask B.J."/>
            <person name="Young J.M."/>
            <person name="Huang H."/>
            <person name="Wang H."/>
            <person name="Xing H."/>
            <person name="Daniels S."/>
            <person name="Gietzen D."/>
            <person name="Schmidt J."/>
            <person name="Stevens K."/>
            <person name="Vitt U."/>
            <person name="Wingrove J."/>
            <person name="Camara F."/>
            <person name="Mar Alba M."/>
            <person name="Abril J.F."/>
            <person name="Guigo R."/>
            <person name="Smit A."/>
            <person name="Dubchak I."/>
            <person name="Rubin E.M."/>
            <person name="Couronne O."/>
            <person name="Poliakov A."/>
            <person name="Huebner N."/>
            <person name="Ganten D."/>
            <person name="Goesele C."/>
            <person name="Hummel O."/>
            <person name="Kreitler T."/>
            <person name="Lee Y.-A."/>
            <person name="Monti J."/>
            <person name="Schulz H."/>
            <person name="Zimdahl H."/>
            <person name="Himmelbauer H."/>
            <person name="Lehrach H."/>
            <person name="Jacob H.J."/>
            <person name="Bromberg S."/>
            <person name="Gullings-Handley J."/>
            <person name="Jensen-Seaman M.I."/>
            <person name="Kwitek A.E."/>
            <person name="Lazar J."/>
            <person name="Pasko D."/>
            <person name="Tonellato P.J."/>
            <person name="Twigger S."/>
            <person name="Ponting C.P."/>
            <person name="Duarte J.M."/>
            <person name="Rice S."/>
            <person name="Goodstadt L."/>
            <person name="Beatson S.A."/>
            <person name="Emes R.D."/>
            <person name="Winter E.E."/>
            <person name="Webber C."/>
            <person name="Brandt P."/>
            <person name="Nyakatura G."/>
            <person name="Adetobi M."/>
            <person name="Chiaromonte F."/>
            <person name="Elnitski L."/>
            <person name="Eswara P."/>
            <person name="Hardison R.C."/>
            <person name="Hou M."/>
            <person name="Kolbe D."/>
            <person name="Makova K."/>
            <person name="Miller W."/>
            <person name="Nekrutenko A."/>
            <person name="Riemer C."/>
            <person name="Schwartz S."/>
            <person name="Taylor J."/>
            <person name="Yang S."/>
            <person name="Zhang Y."/>
            <person name="Lindpaintner K."/>
            <person name="Andrews T.D."/>
            <person name="Caccamo M."/>
            <person name="Clamp M."/>
            <person name="Clarke L."/>
            <person name="Curwen V."/>
            <person name="Durbin R.M."/>
            <person name="Eyras E."/>
            <person name="Searle S.M."/>
            <person name="Cooper G.M."/>
            <person name="Batzoglou S."/>
            <person name="Brudno M."/>
            <person name="Sidow A."/>
            <person name="Stone E.A."/>
            <person name="Payseur B.A."/>
            <person name="Bourque G."/>
            <person name="Lopez-Otin C."/>
            <person name="Puente X.S."/>
            <person name="Chakrabarti K."/>
            <person name="Chatterji S."/>
            <person name="Dewey C."/>
            <person name="Pachter L."/>
            <person name="Bray N."/>
            <person name="Yap V.B."/>
            <person name="Caspi A."/>
            <person name="Tesler G."/>
            <person name="Pevzner P.A."/>
            <person name="Haussler D."/>
            <person name="Roskin K.M."/>
            <person name="Baertsch R."/>
            <person name="Clawson H."/>
            <person name="Furey T.S."/>
            <person name="Hinrichs A.S."/>
            <person name="Karolchik D."/>
            <person name="Kent W.J."/>
            <person name="Rosenbloom K.R."/>
            <person name="Trumbower H."/>
            <person name="Weirauch M."/>
            <person name="Cooper D.N."/>
            <person name="Stenson P.D."/>
            <person name="Ma B."/>
            <person name="Brent M."/>
            <person name="Arumugam M."/>
            <person name="Shteynberg D."/>
            <person name="Copley R.R."/>
            <person name="Taylor M.S."/>
            <person name="Riethman H."/>
            <person name="Mudunuri U."/>
            <person name="Peterson J."/>
            <person name="Guyer M."/>
            <person name="Felsenfeld A."/>
            <person name="Old S."/>
            <person name="Mockrin S."/>
            <person name="Collins F.S."/>
        </authorList>
    </citation>
    <scope>NUCLEOTIDE SEQUENCE [LARGE SCALE GENOMIC DNA]</scope>
    <source>
        <strain evidence="15">Brown Norway</strain>
    </source>
</reference>
<reference evidence="13 14" key="6">
    <citation type="submission" date="2005-07" db="EMBL/GenBank/DDBJ databases">
        <authorList>
            <person name="Mural R.J."/>
            <person name="Adams M.D."/>
            <person name="Myers E.W."/>
            <person name="Smith H.O."/>
            <person name="Venter J.C."/>
        </authorList>
    </citation>
    <scope>NUCLEOTIDE SEQUENCE [LARGE SCALE GENOMIC DNA] (ISOFORMS 1 AND 2)</scope>
</reference>
<protein>
    <recommendedName>
        <fullName evidence="7">Matrix extracellular phosphoglycoprotein</fullName>
    </recommendedName>
    <alternativeName>
        <fullName evidence="6">Osteoblast/osteocyte factor 45</fullName>
        <shortName evidence="6">OF45</shortName>
    </alternativeName>
    <alternativeName>
        <fullName evidence="2">Osteoregulin</fullName>
    </alternativeName>
</protein>
<keyword id="KW-0025">Alternative splicing</keyword>
<keyword id="KW-0091">Biomineralization</keyword>
<keyword id="KW-0272">Extracellular matrix</keyword>
<keyword id="KW-0325">Glycoprotein</keyword>
<keyword id="KW-0597">Phosphoprotein</keyword>
<keyword id="KW-0654">Proteoglycan</keyword>
<keyword id="KW-1185">Reference proteome</keyword>
<keyword id="KW-0964">Secreted</keyword>
<keyword id="KW-0732">Signal</keyword>
<feature type="signal peptide" evidence="3">
    <location>
        <begin position="1"/>
        <end position="16"/>
    </location>
</feature>
<feature type="chain" id="PRO_5010147977" description="Matrix extracellular phosphoglycoprotein" evidence="3">
    <location>
        <begin position="17"/>
        <end position="435"/>
    </location>
</feature>
<feature type="region of interest" description="Disordered" evidence="4">
    <location>
        <begin position="124"/>
        <end position="145"/>
    </location>
</feature>
<feature type="region of interest" description="Dentonin" evidence="2">
    <location>
        <begin position="164"/>
        <end position="186"/>
    </location>
</feature>
<feature type="region of interest" description="Disordered" evidence="4">
    <location>
        <begin position="166"/>
        <end position="435"/>
    </location>
</feature>
<feature type="region of interest" description="ASARM motif; interaction with PHEX" evidence="1">
    <location>
        <begin position="418"/>
        <end position="435"/>
    </location>
</feature>
<feature type="short sequence motif" description="Cell attachment site" evidence="2">
    <location>
        <begin position="169"/>
        <end position="171"/>
    </location>
</feature>
<feature type="compositionally biased region" description="Basic and acidic residues" evidence="4">
    <location>
        <begin position="267"/>
        <end position="278"/>
    </location>
</feature>
<feature type="compositionally biased region" description="Basic and acidic residues" evidence="4">
    <location>
        <begin position="300"/>
        <end position="313"/>
    </location>
</feature>
<feature type="compositionally biased region" description="Polar residues" evidence="4">
    <location>
        <begin position="337"/>
        <end position="346"/>
    </location>
</feature>
<feature type="compositionally biased region" description="Basic residues" evidence="4">
    <location>
        <begin position="382"/>
        <end position="391"/>
    </location>
</feature>
<feature type="compositionally biased region" description="Basic residues" evidence="4">
    <location>
        <begin position="405"/>
        <end position="415"/>
    </location>
</feature>
<feature type="compositionally biased region" description="Low complexity" evidence="4">
    <location>
        <begin position="422"/>
        <end position="435"/>
    </location>
</feature>
<feature type="glycosylation site" description="N-linked (GlcNAc...) asparagine" evidence="3">
    <location>
        <position position="71"/>
    </location>
</feature>
<feature type="glycosylation site" description="O-linked (Xyl...) (chondroitin sulfate) serine" evidence="2">
    <location>
        <position position="178"/>
    </location>
</feature>
<feature type="splice variant" id="VSP_059757" description="In isoform 2." evidence="8">
    <original>AVSVGLFLFSMTWAAP</original>
    <variation>FLLSQNLKTENEHREPKTGWGKCH</variation>
    <location>
        <begin position="3"/>
        <end position="18"/>
    </location>
</feature>
<feature type="sequence conflict" description="In Ref. 4; ACS37551 and 6; AC136829/EDL99493." evidence="8" ref="4 6">
    <original>M</original>
    <variation>T</variation>
    <location>
        <position position="43"/>
    </location>
</feature>
<feature type="sequence conflict" description="In Ref. 4; ACS37551 and 6; AC136829/EDL99493." evidence="8" ref="4 6">
    <original>L</original>
    <variation>P</variation>
    <location>
        <position position="59"/>
    </location>
</feature>
<feature type="sequence conflict" description="In Ref. 4; ACS37551 and 6; AC136829/EDL99493." evidence="8" ref="4 6">
    <original>T</original>
    <variation>A</variation>
    <location>
        <position position="109"/>
    </location>
</feature>
<feature type="sequence conflict" description="In Ref. 4; ACS37551 and 6; AC136829/EDL99493." evidence="8" ref="4 6">
    <original>A</original>
    <variation>T</variation>
    <location>
        <position position="328"/>
    </location>
</feature>
<feature type="sequence conflict" description="In Ref. 4; ACS37551 and 6; AC136829/EDL99493." evidence="8" ref="4 6">
    <original>A</original>
    <variation>P</variation>
    <location>
        <position position="403"/>
    </location>
</feature>
<dbReference type="EMBL" id="AF260922">
    <property type="protein sequence ID" value="AAG33366.1"/>
    <property type="molecule type" value="mRNA"/>
</dbReference>
<dbReference type="EMBL" id="AF530558">
    <property type="protein sequence ID" value="AAM94403.1"/>
    <property type="molecule type" value="mRNA"/>
</dbReference>
<dbReference type="EMBL" id="AF530559">
    <property type="protein sequence ID" value="AAM94404.1"/>
    <property type="molecule type" value="mRNA"/>
</dbReference>
<dbReference type="EMBL" id="FJ999701">
    <property type="protein sequence ID" value="ACS37551.1"/>
    <property type="molecule type" value="Genomic_DNA"/>
</dbReference>
<dbReference type="EMBL" id="AC136829">
    <property type="status" value="NOT_ANNOTATED_CDS"/>
    <property type="molecule type" value="Genomic_DNA"/>
</dbReference>
<dbReference type="EMBL" id="CH474022">
    <property type="protein sequence ID" value="EDL99493.1"/>
    <property type="molecule type" value="Genomic_DNA"/>
</dbReference>
<dbReference type="EMBL" id="CH474022">
    <property type="protein sequence ID" value="EDL99494.1"/>
    <property type="molecule type" value="Genomic_DNA"/>
</dbReference>
<dbReference type="RefSeq" id="NP_077056.1">
    <molecule id="Q9ES02-1"/>
    <property type="nucleotide sequence ID" value="NM_024142.1"/>
</dbReference>
<dbReference type="RefSeq" id="XP_006250697.1">
    <property type="nucleotide sequence ID" value="XM_006250635.3"/>
</dbReference>
<dbReference type="FunCoup" id="Q9ES02">
    <property type="interactions" value="5"/>
</dbReference>
<dbReference type="STRING" id="10116.ENSRNOP00000074247"/>
<dbReference type="GlyCosmos" id="Q9ES02">
    <property type="glycosylation" value="1 site, No reported glycans"/>
</dbReference>
<dbReference type="GlyGen" id="Q9ES02">
    <property type="glycosylation" value="2 sites"/>
</dbReference>
<dbReference type="PhosphoSitePlus" id="Q9ES02"/>
<dbReference type="PaxDb" id="10116-ENSRNOP00000002927"/>
<dbReference type="GeneID" id="79110"/>
<dbReference type="KEGG" id="rno:79110"/>
<dbReference type="AGR" id="RGD:71036"/>
<dbReference type="CTD" id="56955"/>
<dbReference type="RGD" id="71036">
    <property type="gene designation" value="Mepe"/>
</dbReference>
<dbReference type="eggNOG" id="ENOG502SW2S">
    <property type="taxonomic scope" value="Eukaryota"/>
</dbReference>
<dbReference type="HOGENOM" id="CLU_039303_0_0_1"/>
<dbReference type="InParanoid" id="Q9ES02"/>
<dbReference type="OrthoDB" id="9041543at2759"/>
<dbReference type="PhylomeDB" id="Q9ES02"/>
<dbReference type="Reactome" id="R-RNO-381426">
    <property type="pathway name" value="Regulation of Insulin-like Growth Factor (IGF) transport and uptake by Insulin-like Growth Factor Binding Proteins (IGFBPs)"/>
</dbReference>
<dbReference type="Reactome" id="R-RNO-8957275">
    <property type="pathway name" value="Post-translational protein phosphorylation"/>
</dbReference>
<dbReference type="PRO" id="PR:Q9ES02"/>
<dbReference type="Proteomes" id="UP000002494">
    <property type="component" value="Unplaced"/>
</dbReference>
<dbReference type="Proteomes" id="UP000234681">
    <property type="component" value="Chromosome 14"/>
</dbReference>
<dbReference type="GO" id="GO:0031012">
    <property type="term" value="C:extracellular matrix"/>
    <property type="evidence" value="ECO:0000318"/>
    <property type="project" value="GO_Central"/>
</dbReference>
<dbReference type="GO" id="GO:0005576">
    <property type="term" value="C:extracellular region"/>
    <property type="evidence" value="ECO:0007669"/>
    <property type="project" value="UniProtKB-SubCell"/>
</dbReference>
<dbReference type="GO" id="GO:1990430">
    <property type="term" value="F:extracellular matrix protein binding"/>
    <property type="evidence" value="ECO:0000318"/>
    <property type="project" value="GO_Central"/>
</dbReference>
<dbReference type="GO" id="GO:0031214">
    <property type="term" value="P:biomineral tissue development"/>
    <property type="evidence" value="ECO:0000318"/>
    <property type="project" value="GO_Central"/>
</dbReference>
<dbReference type="GO" id="GO:0030282">
    <property type="term" value="P:bone mineralization"/>
    <property type="evidence" value="ECO:0000266"/>
    <property type="project" value="RGD"/>
</dbReference>
<dbReference type="GO" id="GO:0030502">
    <property type="term" value="P:negative regulation of bone mineralization"/>
    <property type="evidence" value="ECO:0000266"/>
    <property type="project" value="RGD"/>
</dbReference>
<dbReference type="GO" id="GO:0046850">
    <property type="term" value="P:regulation of bone remodeling"/>
    <property type="evidence" value="ECO:0000270"/>
    <property type="project" value="RGD"/>
</dbReference>
<dbReference type="InterPro" id="IPR009837">
    <property type="entry name" value="MEPE"/>
</dbReference>
<dbReference type="PANTHER" id="PTHR16510">
    <property type="entry name" value="EXTRACELLULAR MATRIX PHOSPHOGLYCOPROTEIN WITH ASARM MOTIF"/>
    <property type="match status" value="1"/>
</dbReference>
<dbReference type="PANTHER" id="PTHR16510:SF4">
    <property type="entry name" value="MATRIX EXTRACELLULAR PHOSPHOGLYCOPROTEIN"/>
    <property type="match status" value="1"/>
</dbReference>
<dbReference type="Pfam" id="PF07175">
    <property type="entry name" value="Osteoregulin"/>
    <property type="match status" value="1"/>
</dbReference>
<name>MEPE_RAT</name>
<organism evidence="9">
    <name type="scientific">Rattus norvegicus</name>
    <name type="common">Rat</name>
    <dbReference type="NCBI Taxonomy" id="10116"/>
    <lineage>
        <taxon>Eukaryota</taxon>
        <taxon>Metazoa</taxon>
        <taxon>Chordata</taxon>
        <taxon>Craniata</taxon>
        <taxon>Vertebrata</taxon>
        <taxon>Euteleostomi</taxon>
        <taxon>Mammalia</taxon>
        <taxon>Eutheria</taxon>
        <taxon>Euarchontoglires</taxon>
        <taxon>Glires</taxon>
        <taxon>Rodentia</taxon>
        <taxon>Myomorpha</taxon>
        <taxon>Muroidea</taxon>
        <taxon>Muridae</taxon>
        <taxon>Murinae</taxon>
        <taxon>Rattus</taxon>
    </lineage>
</organism>
<evidence type="ECO:0000250" key="1">
    <source>
        <dbReference type="UniProtKB" id="Q8K4L6"/>
    </source>
</evidence>
<evidence type="ECO:0000250" key="2">
    <source>
        <dbReference type="UniProtKB" id="Q9NQ76"/>
    </source>
</evidence>
<evidence type="ECO:0000255" key="3"/>
<evidence type="ECO:0000256" key="4">
    <source>
        <dbReference type="SAM" id="MobiDB-lite"/>
    </source>
</evidence>
<evidence type="ECO:0000269" key="5">
    <source>
    </source>
</evidence>
<evidence type="ECO:0000303" key="6">
    <source>
    </source>
</evidence>
<evidence type="ECO:0000303" key="7">
    <source>
    </source>
</evidence>
<evidence type="ECO:0000305" key="8"/>
<evidence type="ECO:0000312" key="9">
    <source>
        <dbReference type="EMBL" id="AAG33366.1"/>
    </source>
</evidence>
<evidence type="ECO:0000312" key="10">
    <source>
        <dbReference type="EMBL" id="AAM94403.1"/>
    </source>
</evidence>
<evidence type="ECO:0000312" key="11">
    <source>
        <dbReference type="EMBL" id="AAM94404.1"/>
    </source>
</evidence>
<evidence type="ECO:0000312" key="12">
    <source>
        <dbReference type="EMBL" id="ACS37551.1"/>
    </source>
</evidence>
<evidence type="ECO:0000312" key="13">
    <source>
        <dbReference type="EMBL" id="EDL99493.1"/>
    </source>
</evidence>
<evidence type="ECO:0000312" key="14">
    <source>
        <dbReference type="EMBL" id="EDL99494.1"/>
    </source>
</evidence>
<evidence type="ECO:0000312" key="15">
    <source>
        <dbReference type="Proteomes" id="UP000002494"/>
    </source>
</evidence>
<evidence type="ECO:0000312" key="16">
    <source>
        <dbReference type="RGD" id="71036"/>
    </source>
</evidence>
<sequence length="435" mass="46516">MQAVSVGLFLFSMTWAAPKLNEDGSSGGNQGNIHLASVKPEPMVGKGTEGGRDAPLHLLDQNRQGATLLRNITQPVKSLVTGTEVQSDRNKEKKPQSVLSVIPTDVHNTNDYSEDTENQQRDLLLQNSPGQSKHTPRARRSTHYLTHLPQIRKILSDFEDSASPDLLVRGDNDVPPFSGDGQHFMHTPDRGGAVGSDPESSAGHPVSGSSNVEIVDPHTNGLGSNEIPGREGHIGGAYATRGKTAQGAGSADVSLVEGSNEITGSTKFRELPGKEGNRVDASSQNAHQGKVEFHYPQAPSKEKVKGGSREHTGKAGYNEIPKSSKGGASKDAEESKGNQVTLTESQRFPGKGKGQSSHSLGNEVKSEEDSSNSLSREGIAIAHRRTSHPTRNRGMSQRRGSWASRRPHPHRRVSTRQRDSSESSSSGSSSESSGD</sequence>
<gene>
    <name evidence="16" type="primary">Mepe</name>
</gene>
<accession>Q9ES02</accession>
<accession>A0A0G2K7K7</accession>
<accession>D6C6P2</accession>
<accession>Q8K3V0</accession>